<proteinExistence type="inferred from homology"/>
<feature type="chain" id="PRO_1000057226" description="Cobyrinate a,c-diamide synthase">
    <location>
        <begin position="1"/>
        <end position="451"/>
    </location>
</feature>
<feature type="domain" description="GATase cobBQ-type" evidence="1">
    <location>
        <begin position="246"/>
        <end position="437"/>
    </location>
</feature>
<feature type="active site" description="Nucleophile" evidence="1">
    <location>
        <position position="328"/>
    </location>
</feature>
<feature type="site" description="Increases nucleophilicity of active site Cys" evidence="1">
    <location>
        <position position="429"/>
    </location>
</feature>
<evidence type="ECO:0000255" key="1">
    <source>
        <dbReference type="HAMAP-Rule" id="MF_00027"/>
    </source>
</evidence>
<dbReference type="EC" id="6.3.5.11" evidence="1"/>
<dbReference type="EC" id="6.3.5.12" evidence="1"/>
<dbReference type="EMBL" id="CP000678">
    <property type="protein sequence ID" value="ABQ87420.1"/>
    <property type="molecule type" value="Genomic_DNA"/>
</dbReference>
<dbReference type="RefSeq" id="WP_011954363.1">
    <property type="nucleotide sequence ID" value="NZ_CP117965.1"/>
</dbReference>
<dbReference type="SMR" id="A5UMJ2"/>
<dbReference type="STRING" id="420247.Msm_1215"/>
<dbReference type="EnsemblBacteria" id="ABQ87420">
    <property type="protein sequence ID" value="ABQ87420"/>
    <property type="gene ID" value="Msm_1215"/>
</dbReference>
<dbReference type="GeneID" id="78817868"/>
<dbReference type="KEGG" id="msi:Msm_1215"/>
<dbReference type="PATRIC" id="fig|420247.28.peg.1214"/>
<dbReference type="eggNOG" id="arCOG00106">
    <property type="taxonomic scope" value="Archaea"/>
</dbReference>
<dbReference type="HOGENOM" id="CLU_022752_2_0_2"/>
<dbReference type="UniPathway" id="UPA00148">
    <property type="reaction ID" value="UER00231"/>
</dbReference>
<dbReference type="Proteomes" id="UP000001992">
    <property type="component" value="Chromosome"/>
</dbReference>
<dbReference type="GO" id="GO:0005524">
    <property type="term" value="F:ATP binding"/>
    <property type="evidence" value="ECO:0007669"/>
    <property type="project" value="UniProtKB-UniRule"/>
</dbReference>
<dbReference type="GO" id="GO:0042242">
    <property type="term" value="F:cobyrinic acid a,c-diamide synthase activity"/>
    <property type="evidence" value="ECO:0007669"/>
    <property type="project" value="UniProtKB-UniRule"/>
</dbReference>
<dbReference type="GO" id="GO:0009236">
    <property type="term" value="P:cobalamin biosynthetic process"/>
    <property type="evidence" value="ECO:0007669"/>
    <property type="project" value="UniProtKB-UniRule"/>
</dbReference>
<dbReference type="GO" id="GO:0015948">
    <property type="term" value="P:methanogenesis"/>
    <property type="evidence" value="ECO:0007669"/>
    <property type="project" value="UniProtKB-KW"/>
</dbReference>
<dbReference type="CDD" id="cd05388">
    <property type="entry name" value="CobB_N"/>
    <property type="match status" value="1"/>
</dbReference>
<dbReference type="CDD" id="cd03130">
    <property type="entry name" value="GATase1_CobB"/>
    <property type="match status" value="1"/>
</dbReference>
<dbReference type="Gene3D" id="3.40.50.880">
    <property type="match status" value="1"/>
</dbReference>
<dbReference type="Gene3D" id="3.40.50.300">
    <property type="entry name" value="P-loop containing nucleotide triphosphate hydrolases"/>
    <property type="match status" value="1"/>
</dbReference>
<dbReference type="HAMAP" id="MF_00027">
    <property type="entry name" value="CobB_CbiA"/>
    <property type="match status" value="1"/>
</dbReference>
<dbReference type="InterPro" id="IPR004484">
    <property type="entry name" value="CbiA/CobB_synth"/>
</dbReference>
<dbReference type="InterPro" id="IPR029062">
    <property type="entry name" value="Class_I_gatase-like"/>
</dbReference>
<dbReference type="InterPro" id="IPR002586">
    <property type="entry name" value="CobQ/CobB/MinD/ParA_Nub-bd_dom"/>
</dbReference>
<dbReference type="InterPro" id="IPR011698">
    <property type="entry name" value="GATase_3"/>
</dbReference>
<dbReference type="InterPro" id="IPR027417">
    <property type="entry name" value="P-loop_NTPase"/>
</dbReference>
<dbReference type="NCBIfam" id="TIGR00379">
    <property type="entry name" value="cobB"/>
    <property type="match status" value="1"/>
</dbReference>
<dbReference type="NCBIfam" id="NF033195">
    <property type="entry name" value="F430_CfbB"/>
    <property type="match status" value="1"/>
</dbReference>
<dbReference type="NCBIfam" id="NF002204">
    <property type="entry name" value="PRK01077.1"/>
    <property type="match status" value="1"/>
</dbReference>
<dbReference type="PANTHER" id="PTHR43873">
    <property type="entry name" value="COBYRINATE A,C-DIAMIDE SYNTHASE"/>
    <property type="match status" value="1"/>
</dbReference>
<dbReference type="PANTHER" id="PTHR43873:SF1">
    <property type="entry name" value="COBYRINATE A,C-DIAMIDE SYNTHASE"/>
    <property type="match status" value="1"/>
</dbReference>
<dbReference type="Pfam" id="PF01656">
    <property type="entry name" value="CbiA"/>
    <property type="match status" value="1"/>
</dbReference>
<dbReference type="Pfam" id="PF07685">
    <property type="entry name" value="GATase_3"/>
    <property type="match status" value="1"/>
</dbReference>
<dbReference type="SUPFAM" id="SSF52317">
    <property type="entry name" value="Class I glutamine amidotransferase-like"/>
    <property type="match status" value="1"/>
</dbReference>
<dbReference type="SUPFAM" id="SSF52540">
    <property type="entry name" value="P-loop containing nucleoside triphosphate hydrolases"/>
    <property type="match status" value="1"/>
</dbReference>
<dbReference type="PROSITE" id="PS51274">
    <property type="entry name" value="GATASE_COBBQ"/>
    <property type="match status" value="1"/>
</dbReference>
<accession>A5UMJ2</accession>
<name>CBIA_METS3</name>
<reference key="1">
    <citation type="journal article" date="2007" name="Proc. Natl. Acad. Sci. U.S.A.">
        <title>Genomic and metabolic adaptations of Methanobrevibacter smithii to the human gut.</title>
        <authorList>
            <person name="Samuel B.S."/>
            <person name="Hansen E.E."/>
            <person name="Manchester J.K."/>
            <person name="Coutinho P.M."/>
            <person name="Henrissat B."/>
            <person name="Fulton R."/>
            <person name="Latreille P."/>
            <person name="Kim K."/>
            <person name="Wilson R.K."/>
            <person name="Gordon J.I."/>
        </authorList>
    </citation>
    <scope>NUCLEOTIDE SEQUENCE [LARGE SCALE GENOMIC DNA]</scope>
    <source>
        <strain>ATCC 35061 / DSM 861 / OCM 144 / PS</strain>
    </source>
</reference>
<comment type="function">
    <text evidence="1">Catalyzes the ATP-dependent amidation of the two carboxylate groups at positions a and c of cobyrinate, using either L-glutamine or ammonia as the nitrogen source. Involved in the biosynthesis of the unique nickel-containing tetrapyrrole coenzyme F430, the prosthetic group of methyl-coenzyme M reductase (MCR), which plays a key role in methanogenesis and anaerobic methane oxidation. Catalyzes the ATP-dependent amidation of the two carboxylate groups at positions a and c of Ni-sirohydrochlorin, using L-glutamine or ammonia as the nitrogen source.</text>
</comment>
<comment type="catalytic activity">
    <reaction evidence="1">
        <text>cob(II)yrinate + 2 L-glutamine + 2 ATP + 2 H2O = cob(II)yrinate a,c diamide + 2 L-glutamate + 2 ADP + 2 phosphate + 2 H(+)</text>
        <dbReference type="Rhea" id="RHEA:26289"/>
        <dbReference type="ChEBI" id="CHEBI:15377"/>
        <dbReference type="ChEBI" id="CHEBI:15378"/>
        <dbReference type="ChEBI" id="CHEBI:29985"/>
        <dbReference type="ChEBI" id="CHEBI:30616"/>
        <dbReference type="ChEBI" id="CHEBI:43474"/>
        <dbReference type="ChEBI" id="CHEBI:58359"/>
        <dbReference type="ChEBI" id="CHEBI:58537"/>
        <dbReference type="ChEBI" id="CHEBI:58894"/>
        <dbReference type="ChEBI" id="CHEBI:456216"/>
        <dbReference type="EC" id="6.3.5.11"/>
    </reaction>
</comment>
<comment type="catalytic activity">
    <reaction evidence="1">
        <text>Ni-sirohydrochlorin + 2 L-glutamine + 2 ATP + 2 H2O = Ni-sirohydrochlorin a,c-diamide + 2 L-glutamate + 2 ADP + 2 phosphate + 2 H(+)</text>
        <dbReference type="Rhea" id="RHEA:52896"/>
        <dbReference type="ChEBI" id="CHEBI:15377"/>
        <dbReference type="ChEBI" id="CHEBI:15378"/>
        <dbReference type="ChEBI" id="CHEBI:29985"/>
        <dbReference type="ChEBI" id="CHEBI:30616"/>
        <dbReference type="ChEBI" id="CHEBI:43474"/>
        <dbReference type="ChEBI" id="CHEBI:58359"/>
        <dbReference type="ChEBI" id="CHEBI:136841"/>
        <dbReference type="ChEBI" id="CHEBI:136887"/>
        <dbReference type="ChEBI" id="CHEBI:456216"/>
        <dbReference type="EC" id="6.3.5.12"/>
    </reaction>
</comment>
<comment type="cofactor">
    <cofactor evidence="1">
        <name>Mg(2+)</name>
        <dbReference type="ChEBI" id="CHEBI:18420"/>
    </cofactor>
</comment>
<comment type="pathway">
    <text evidence="1">Cofactor biosynthesis; adenosylcobalamin biosynthesis; cob(II)yrinate a,c-diamide from sirohydrochlorin (anaerobic route): step 10/10.</text>
</comment>
<comment type="domain">
    <text evidence="1">Comprises of two domains. The C-terminal domain contains the binding site for glutamine and catalyzes the hydrolysis of this substrate to glutamate and ammonia. The N-terminal domain is anticipated to bind ATP, and cobyrinate or Ni-sirohydrochlorin, and catalyzes the ultimate synthesis of the diamide product. The ammonia produced via the glutaminase domain is probably translocated to the adjacent domain via a molecular tunnel, where it reacts with an activated intermediate.</text>
</comment>
<comment type="miscellaneous">
    <text evidence="1">The a and c carboxylates of cobyrinate and Ni-sirohydrochlorin are activated for nucleophilic attack via formation of a phosphorylated intermediate by ATP. CbiA catalyzes first the amidation of the c-carboxylate, and then that of the a-carboxylate.</text>
</comment>
<comment type="similarity">
    <text evidence="1">Belongs to the CobB/CbiA family.</text>
</comment>
<gene>
    <name evidence="1" type="primary">cbiA</name>
    <name evidence="1" type="synonym">cfbB</name>
    <name type="ordered locus">Msm_1215</name>
</gene>
<sequence>MRIILAGTGSAVGKTTIATGIMKALSEEYNVQPFKVGPDYIDPTYHTLATGNTSRNLDSFFMKEGQVRDAFLKAMEKKDIAIIEGVRGLYEGIDSINDIGSTASIAKSLNAPVILIINSRSLVKSAAALVLGFKALDPEINIAGVILNKVKNNAHYLKTKKSIEEITDVEVIGGIIRDDSISIEQRHLGLVPAVERENSLSFIELWSNIIKESIDLDRLVEIAKEAPKLTSPREDIWNKLNKQKVKIGVAYDEVFNFYYKENIESLEANSCKVEYFSPLKDESLPDVDGLYIGGGYPELFSKELSQNTVLLKQIKQFHMENRPIFAECGGLMYLMNSIHEDKQVGVYPYNSILTDKVQALKYTIAEVKKDNIISKKGEKFNGHEFHYSKVLVDNSNIKHDLAFNILRGKGSYNNQDGFMEKNTLASYVHTHVAAMPNFGGNLAISAREVGG</sequence>
<protein>
    <recommendedName>
        <fullName evidence="1">Cobyrinate a,c-diamide synthase</fullName>
        <ecNumber evidence="1">6.3.5.11</ecNumber>
    </recommendedName>
    <alternativeName>
        <fullName evidence="1">Cobyrinic acid a,c-diamide synthetase</fullName>
    </alternativeName>
    <alternativeName>
        <fullName evidence="1">Ni-sirohydrochlorin a,c-diamide synthase</fullName>
        <ecNumber evidence="1">6.3.5.12</ecNumber>
    </alternativeName>
    <alternativeName>
        <fullName evidence="1">Ni-sirohydrochlorin a,c-diamide synthetase</fullName>
    </alternativeName>
</protein>
<keyword id="KW-0067">ATP-binding</keyword>
<keyword id="KW-0169">Cobalamin biosynthesis</keyword>
<keyword id="KW-0315">Glutamine amidotransferase</keyword>
<keyword id="KW-0436">Ligase</keyword>
<keyword id="KW-0460">Magnesium</keyword>
<keyword id="KW-0484">Methanogenesis</keyword>
<keyword id="KW-0547">Nucleotide-binding</keyword>
<organism>
    <name type="scientific">Methanobrevibacter smithii (strain ATCC 35061 / DSM 861 / OCM 144 / PS)</name>
    <dbReference type="NCBI Taxonomy" id="420247"/>
    <lineage>
        <taxon>Archaea</taxon>
        <taxon>Methanobacteriati</taxon>
        <taxon>Methanobacteriota</taxon>
        <taxon>Methanomada group</taxon>
        <taxon>Methanobacteria</taxon>
        <taxon>Methanobacteriales</taxon>
        <taxon>Methanobacteriaceae</taxon>
        <taxon>Methanobrevibacter</taxon>
    </lineage>
</organism>